<name>Y319_CHLCH</name>
<gene>
    <name type="ordered locus">Cag_0319</name>
</gene>
<protein>
    <recommendedName>
        <fullName evidence="1">UPF0235 protein Cag_0319</fullName>
    </recommendedName>
</protein>
<sequence>MVELQEKNGSVCIAVRAQPRSSKSMVSGEWNGALKVHLQSPPVDDAANEECCRLLARLFQVPPSRVHLVAGHSSRNKRVMVEGVSAAMATELLQPFLHT</sequence>
<comment type="similarity">
    <text evidence="1">Belongs to the UPF0235 family.</text>
</comment>
<dbReference type="EMBL" id="CP000108">
    <property type="protein sequence ID" value="ABB27592.1"/>
    <property type="molecule type" value="Genomic_DNA"/>
</dbReference>
<dbReference type="SMR" id="Q3ATT3"/>
<dbReference type="STRING" id="340177.Cag_0319"/>
<dbReference type="KEGG" id="cch:Cag_0319"/>
<dbReference type="eggNOG" id="COG1872">
    <property type="taxonomic scope" value="Bacteria"/>
</dbReference>
<dbReference type="HOGENOM" id="CLU_130694_6_0_10"/>
<dbReference type="OrthoDB" id="9800587at2"/>
<dbReference type="GO" id="GO:0005737">
    <property type="term" value="C:cytoplasm"/>
    <property type="evidence" value="ECO:0007669"/>
    <property type="project" value="TreeGrafter"/>
</dbReference>
<dbReference type="Gene3D" id="3.30.1200.10">
    <property type="entry name" value="YggU-like"/>
    <property type="match status" value="1"/>
</dbReference>
<dbReference type="HAMAP" id="MF_00634">
    <property type="entry name" value="UPF0235"/>
    <property type="match status" value="1"/>
</dbReference>
<dbReference type="InterPro" id="IPR003746">
    <property type="entry name" value="DUF167"/>
</dbReference>
<dbReference type="InterPro" id="IPR036591">
    <property type="entry name" value="YggU-like_sf"/>
</dbReference>
<dbReference type="NCBIfam" id="TIGR00251">
    <property type="entry name" value="DUF167 family protein"/>
    <property type="match status" value="1"/>
</dbReference>
<dbReference type="PANTHER" id="PTHR13420">
    <property type="entry name" value="UPF0235 PROTEIN C15ORF40"/>
    <property type="match status" value="1"/>
</dbReference>
<dbReference type="PANTHER" id="PTHR13420:SF7">
    <property type="entry name" value="UPF0235 PROTEIN C15ORF40"/>
    <property type="match status" value="1"/>
</dbReference>
<dbReference type="Pfam" id="PF02594">
    <property type="entry name" value="DUF167"/>
    <property type="match status" value="1"/>
</dbReference>
<dbReference type="SMART" id="SM01152">
    <property type="entry name" value="DUF167"/>
    <property type="match status" value="1"/>
</dbReference>
<dbReference type="SUPFAM" id="SSF69786">
    <property type="entry name" value="YggU-like"/>
    <property type="match status" value="1"/>
</dbReference>
<organism>
    <name type="scientific">Chlorobium chlorochromatii (strain CaD3)</name>
    <dbReference type="NCBI Taxonomy" id="340177"/>
    <lineage>
        <taxon>Bacteria</taxon>
        <taxon>Pseudomonadati</taxon>
        <taxon>Chlorobiota</taxon>
        <taxon>Chlorobiia</taxon>
        <taxon>Chlorobiales</taxon>
        <taxon>Chlorobiaceae</taxon>
        <taxon>Chlorobium/Pelodictyon group</taxon>
        <taxon>Chlorobium</taxon>
    </lineage>
</organism>
<reference key="1">
    <citation type="submission" date="2005-08" db="EMBL/GenBank/DDBJ databases">
        <title>Complete sequence of Chlorobium chlorochromatii CaD3.</title>
        <authorList>
            <consortium name="US DOE Joint Genome Institute"/>
            <person name="Copeland A."/>
            <person name="Lucas S."/>
            <person name="Lapidus A."/>
            <person name="Barry K."/>
            <person name="Detter J.C."/>
            <person name="Glavina T."/>
            <person name="Hammon N."/>
            <person name="Israni S."/>
            <person name="Pitluck S."/>
            <person name="Bryant D."/>
            <person name="Schmutz J."/>
            <person name="Larimer F."/>
            <person name="Land M."/>
            <person name="Kyrpides N."/>
            <person name="Ivanova N."/>
            <person name="Richardson P."/>
        </authorList>
    </citation>
    <scope>NUCLEOTIDE SEQUENCE [LARGE SCALE GENOMIC DNA]</scope>
    <source>
        <strain>CaD3</strain>
    </source>
</reference>
<proteinExistence type="inferred from homology"/>
<accession>Q3ATT3</accession>
<evidence type="ECO:0000255" key="1">
    <source>
        <dbReference type="HAMAP-Rule" id="MF_00634"/>
    </source>
</evidence>
<feature type="chain" id="PRO_1000056761" description="UPF0235 protein Cag_0319">
    <location>
        <begin position="1"/>
        <end position="99"/>
    </location>
</feature>